<name>ARLY_MOOTA</name>
<gene>
    <name evidence="1" type="primary">argH</name>
    <name type="ordered locus">Moth_2284</name>
</gene>
<keyword id="KW-0028">Amino-acid biosynthesis</keyword>
<keyword id="KW-0055">Arginine biosynthesis</keyword>
<keyword id="KW-0963">Cytoplasm</keyword>
<keyword id="KW-0456">Lyase</keyword>
<dbReference type="EC" id="4.3.2.1" evidence="1"/>
<dbReference type="EMBL" id="CP000232">
    <property type="protein sequence ID" value="ABC20571.1"/>
    <property type="molecule type" value="Genomic_DNA"/>
</dbReference>
<dbReference type="RefSeq" id="YP_431114.1">
    <property type="nucleotide sequence ID" value="NC_007644.1"/>
</dbReference>
<dbReference type="SMR" id="Q2RG68"/>
<dbReference type="STRING" id="264732.Moth_2284"/>
<dbReference type="EnsemblBacteria" id="ABC20571">
    <property type="protein sequence ID" value="ABC20571"/>
    <property type="gene ID" value="Moth_2284"/>
</dbReference>
<dbReference type="KEGG" id="mta:Moth_2284"/>
<dbReference type="PATRIC" id="fig|264732.11.peg.2488"/>
<dbReference type="eggNOG" id="COG0165">
    <property type="taxonomic scope" value="Bacteria"/>
</dbReference>
<dbReference type="HOGENOM" id="CLU_027272_2_3_9"/>
<dbReference type="OrthoDB" id="9769623at2"/>
<dbReference type="UniPathway" id="UPA00068">
    <property type="reaction ID" value="UER00114"/>
</dbReference>
<dbReference type="GO" id="GO:0005829">
    <property type="term" value="C:cytosol"/>
    <property type="evidence" value="ECO:0007669"/>
    <property type="project" value="TreeGrafter"/>
</dbReference>
<dbReference type="GO" id="GO:0004056">
    <property type="term" value="F:argininosuccinate lyase activity"/>
    <property type="evidence" value="ECO:0007669"/>
    <property type="project" value="UniProtKB-UniRule"/>
</dbReference>
<dbReference type="GO" id="GO:0042450">
    <property type="term" value="P:arginine biosynthetic process via ornithine"/>
    <property type="evidence" value="ECO:0007669"/>
    <property type="project" value="InterPro"/>
</dbReference>
<dbReference type="GO" id="GO:0006526">
    <property type="term" value="P:L-arginine biosynthetic process"/>
    <property type="evidence" value="ECO:0007669"/>
    <property type="project" value="UniProtKB-UniRule"/>
</dbReference>
<dbReference type="CDD" id="cd01359">
    <property type="entry name" value="Argininosuccinate_lyase"/>
    <property type="match status" value="1"/>
</dbReference>
<dbReference type="FunFam" id="1.10.275.10:FF:000002">
    <property type="entry name" value="Argininosuccinate lyase"/>
    <property type="match status" value="1"/>
</dbReference>
<dbReference type="FunFam" id="1.10.40.30:FF:000001">
    <property type="entry name" value="Argininosuccinate lyase"/>
    <property type="match status" value="1"/>
</dbReference>
<dbReference type="FunFam" id="1.20.200.10:FF:000006">
    <property type="entry name" value="Argininosuccinate lyase"/>
    <property type="match status" value="1"/>
</dbReference>
<dbReference type="Gene3D" id="1.10.40.30">
    <property type="entry name" value="Fumarase/aspartase (C-terminal domain)"/>
    <property type="match status" value="1"/>
</dbReference>
<dbReference type="Gene3D" id="1.20.200.10">
    <property type="entry name" value="Fumarase/aspartase (Central domain)"/>
    <property type="match status" value="1"/>
</dbReference>
<dbReference type="Gene3D" id="1.10.275.10">
    <property type="entry name" value="Fumarase/aspartase (N-terminal domain)"/>
    <property type="match status" value="1"/>
</dbReference>
<dbReference type="HAMAP" id="MF_00006">
    <property type="entry name" value="Arg_succ_lyase"/>
    <property type="match status" value="1"/>
</dbReference>
<dbReference type="InterPro" id="IPR029419">
    <property type="entry name" value="Arg_succ_lyase_C"/>
</dbReference>
<dbReference type="InterPro" id="IPR009049">
    <property type="entry name" value="Argininosuccinate_lyase"/>
</dbReference>
<dbReference type="InterPro" id="IPR024083">
    <property type="entry name" value="Fumarase/histidase_N"/>
</dbReference>
<dbReference type="InterPro" id="IPR020557">
    <property type="entry name" value="Fumarate_lyase_CS"/>
</dbReference>
<dbReference type="InterPro" id="IPR000362">
    <property type="entry name" value="Fumarate_lyase_fam"/>
</dbReference>
<dbReference type="InterPro" id="IPR022761">
    <property type="entry name" value="Fumarate_lyase_N"/>
</dbReference>
<dbReference type="InterPro" id="IPR008948">
    <property type="entry name" value="L-Aspartase-like"/>
</dbReference>
<dbReference type="NCBIfam" id="TIGR00838">
    <property type="entry name" value="argH"/>
    <property type="match status" value="1"/>
</dbReference>
<dbReference type="PANTHER" id="PTHR43814">
    <property type="entry name" value="ARGININOSUCCINATE LYASE"/>
    <property type="match status" value="1"/>
</dbReference>
<dbReference type="PANTHER" id="PTHR43814:SF1">
    <property type="entry name" value="ARGININOSUCCINATE LYASE"/>
    <property type="match status" value="1"/>
</dbReference>
<dbReference type="Pfam" id="PF14698">
    <property type="entry name" value="ASL_C2"/>
    <property type="match status" value="1"/>
</dbReference>
<dbReference type="Pfam" id="PF00206">
    <property type="entry name" value="Lyase_1"/>
    <property type="match status" value="1"/>
</dbReference>
<dbReference type="PRINTS" id="PR00145">
    <property type="entry name" value="ARGSUCLYASE"/>
</dbReference>
<dbReference type="PRINTS" id="PR00149">
    <property type="entry name" value="FUMRATELYASE"/>
</dbReference>
<dbReference type="SUPFAM" id="SSF48557">
    <property type="entry name" value="L-aspartase-like"/>
    <property type="match status" value="1"/>
</dbReference>
<dbReference type="PROSITE" id="PS00163">
    <property type="entry name" value="FUMARATE_LYASES"/>
    <property type="match status" value="1"/>
</dbReference>
<reference key="1">
    <citation type="journal article" date="2008" name="Environ. Microbiol.">
        <title>The complete genome sequence of Moorella thermoacetica (f. Clostridium thermoaceticum).</title>
        <authorList>
            <person name="Pierce E."/>
            <person name="Xie G."/>
            <person name="Barabote R.D."/>
            <person name="Saunders E."/>
            <person name="Han C.S."/>
            <person name="Detter J.C."/>
            <person name="Richardson P."/>
            <person name="Brettin T.S."/>
            <person name="Das A."/>
            <person name="Ljungdahl L.G."/>
            <person name="Ragsdale S.W."/>
        </authorList>
    </citation>
    <scope>NUCLEOTIDE SEQUENCE [LARGE SCALE GENOMIC DNA]</scope>
    <source>
        <strain>ATCC 39073 / JCM 9320</strain>
    </source>
</reference>
<protein>
    <recommendedName>
        <fullName evidence="1">Argininosuccinate lyase</fullName>
        <shortName evidence="1">ASAL</shortName>
        <ecNumber evidence="1">4.3.2.1</ecNumber>
    </recommendedName>
    <alternativeName>
        <fullName evidence="1">Arginosuccinase</fullName>
    </alternativeName>
</protein>
<comment type="catalytic activity">
    <reaction evidence="1">
        <text>2-(N(omega)-L-arginino)succinate = fumarate + L-arginine</text>
        <dbReference type="Rhea" id="RHEA:24020"/>
        <dbReference type="ChEBI" id="CHEBI:29806"/>
        <dbReference type="ChEBI" id="CHEBI:32682"/>
        <dbReference type="ChEBI" id="CHEBI:57472"/>
        <dbReference type="EC" id="4.3.2.1"/>
    </reaction>
</comment>
<comment type="pathway">
    <text evidence="1">Amino-acid biosynthesis; L-arginine biosynthesis; L-arginine from L-ornithine and carbamoyl phosphate: step 3/3.</text>
</comment>
<comment type="subcellular location">
    <subcellularLocation>
        <location evidence="1">Cytoplasm</location>
    </subcellularLocation>
</comment>
<comment type="similarity">
    <text evidence="1">Belongs to the lyase 1 family. Argininosuccinate lyase subfamily.</text>
</comment>
<accession>Q2RG68</accession>
<sequence>MKLWGGRFTRTTDRLVEDFHSSISFDQRLYKEDIAGSIAHARMLAAVGLITPAEGEAIIKGLEEIRADIEAGRVTFDVGAEDIHMNIEKLLTERIGEAGKKLHTARSRNDQVALDLRLYLKEEIPAVKKLLAGLQQVLVDLAAQHLQTIMPGYTHLQKAQPVTLAHHLMAYFEMFYRDQQRLDDCLDRVDVMPLGAGALAGTTLPIDRELVARELGFKAISANSLDAVSDRDFVVEFLAAASLIMMHLSRLAEEVIFWSSEEFGFLELDDAYSTGSSMMPQKKNPDVAELVRGKTGRVYGHLMGMLAVLKGLPLAYNKDLQEDKEALFDTLDTVKGCLMVFTPMLATARFRVERMRADASRGFAAATDVAEYLVRKGLPFREAHAVVGSLVLHCLREGRSFQDLSLEEWQSFSPLFDNDIFGCLEAEACVNGRNLPGGPAPEAVGKAIERAREILAGIQAGLSR</sequence>
<proteinExistence type="inferred from homology"/>
<evidence type="ECO:0000255" key="1">
    <source>
        <dbReference type="HAMAP-Rule" id="MF_00006"/>
    </source>
</evidence>
<feature type="chain" id="PRO_0000240740" description="Argininosuccinate lyase">
    <location>
        <begin position="1"/>
        <end position="464"/>
    </location>
</feature>
<organism>
    <name type="scientific">Moorella thermoacetica (strain ATCC 39073 / JCM 9320)</name>
    <dbReference type="NCBI Taxonomy" id="264732"/>
    <lineage>
        <taxon>Bacteria</taxon>
        <taxon>Bacillati</taxon>
        <taxon>Bacillota</taxon>
        <taxon>Clostridia</taxon>
        <taxon>Moorellales</taxon>
        <taxon>Moorellaceae</taxon>
        <taxon>Moorella</taxon>
    </lineage>
</organism>